<proteinExistence type="evidence at transcript level"/>
<keyword id="KW-0963">Cytoplasm</keyword>
<keyword id="KW-0238">DNA-binding</keyword>
<keyword id="KW-0479">Metal-binding</keyword>
<keyword id="KW-0539">Nucleus</keyword>
<keyword id="KW-0675">Receptor</keyword>
<keyword id="KW-1185">Reference proteome</keyword>
<keyword id="KW-0804">Transcription</keyword>
<keyword id="KW-0805">Transcription regulation</keyword>
<keyword id="KW-0862">Zinc</keyword>
<keyword id="KW-0863">Zinc-finger</keyword>
<evidence type="ECO:0000250" key="1"/>
<evidence type="ECO:0000250" key="2">
    <source>
        <dbReference type="UniProtKB" id="P48443"/>
    </source>
</evidence>
<evidence type="ECO:0000255" key="3">
    <source>
        <dbReference type="PROSITE-ProRule" id="PRU00407"/>
    </source>
</evidence>
<evidence type="ECO:0000255" key="4">
    <source>
        <dbReference type="PROSITE-ProRule" id="PRU01189"/>
    </source>
</evidence>
<evidence type="ECO:0000256" key="5">
    <source>
        <dbReference type="SAM" id="MobiDB-lite"/>
    </source>
</evidence>
<evidence type="ECO:0000305" key="6"/>
<organism>
    <name type="scientific">Sus scrofa</name>
    <name type="common">Pig</name>
    <dbReference type="NCBI Taxonomy" id="9823"/>
    <lineage>
        <taxon>Eukaryota</taxon>
        <taxon>Metazoa</taxon>
        <taxon>Chordata</taxon>
        <taxon>Craniata</taxon>
        <taxon>Vertebrata</taxon>
        <taxon>Euteleostomi</taxon>
        <taxon>Mammalia</taxon>
        <taxon>Eutheria</taxon>
        <taxon>Laurasiatheria</taxon>
        <taxon>Artiodactyla</taxon>
        <taxon>Suina</taxon>
        <taxon>Suidae</taxon>
        <taxon>Sus</taxon>
    </lineage>
</organism>
<feature type="chain" id="PRO_0000317030" description="Retinoic acid receptor RXR-gamma">
    <location>
        <begin position="1"/>
        <end position="463"/>
    </location>
</feature>
<feature type="domain" description="NR LBD" evidence="4">
    <location>
        <begin position="231"/>
        <end position="459"/>
    </location>
</feature>
<feature type="DNA-binding region" description="Nuclear receptor" evidence="3">
    <location>
        <begin position="139"/>
        <end position="204"/>
    </location>
</feature>
<feature type="zinc finger region" description="NR C4-type" evidence="3">
    <location>
        <begin position="139"/>
        <end position="159"/>
    </location>
</feature>
<feature type="zinc finger region" description="NR C4-type" evidence="3">
    <location>
        <begin position="175"/>
        <end position="199"/>
    </location>
</feature>
<feature type="region of interest" description="Modulating" evidence="1">
    <location>
        <begin position="1"/>
        <end position="138"/>
    </location>
</feature>
<feature type="region of interest" description="Disordered" evidence="5">
    <location>
        <begin position="17"/>
        <end position="53"/>
    </location>
</feature>
<feature type="region of interest" description="Hinge">
    <location>
        <begin position="205"/>
        <end position="230"/>
    </location>
</feature>
<feature type="region of interest" description="Disordered" evidence="5">
    <location>
        <begin position="211"/>
        <end position="232"/>
    </location>
</feature>
<feature type="compositionally biased region" description="Polar residues" evidence="5">
    <location>
        <begin position="21"/>
        <end position="33"/>
    </location>
</feature>
<feature type="compositionally biased region" description="Basic and acidic residues" evidence="5">
    <location>
        <begin position="211"/>
        <end position="222"/>
    </location>
</feature>
<feature type="sequence conflict" description="In Ref. 1; ABI24018." evidence="6" ref="1">
    <original>M</original>
    <variation>T</variation>
    <location>
        <position position="361"/>
    </location>
</feature>
<feature type="sequence conflict" description="In Ref. 1; ABI24018." evidence="6" ref="1">
    <original>I</original>
    <variation>V</variation>
    <location>
        <position position="374"/>
    </location>
</feature>
<gene>
    <name type="primary">RXRG</name>
    <name type="synonym">NR2B3</name>
</gene>
<reference key="1">
    <citation type="submission" date="2006-07" db="EMBL/GenBank/DDBJ databases">
        <title>Cloning and expression of RXR gamma in porcine.</title>
        <authorList>
            <person name="Yu H."/>
            <person name="Song Y."/>
            <person name="Ding J."/>
            <person name="Lee L."/>
        </authorList>
    </citation>
    <scope>NUCLEOTIDE SEQUENCE [MRNA]</scope>
</reference>
<reference key="2">
    <citation type="journal article" date="2004" name="Mamm. Genome">
        <title>High-resolution comparative mapping of pig Chromosome 4, emphasizing the FAT1 region.</title>
        <authorList>
            <person name="Moller M."/>
            <person name="Berg F."/>
            <person name="Riquet J."/>
            <person name="Pomp D."/>
            <person name="Archibald A."/>
            <person name="Anderson S."/>
            <person name="Feve K."/>
            <person name="Zhang Y."/>
            <person name="Rothschild M."/>
            <person name="Milan D."/>
            <person name="Andersson L."/>
            <person name="Tuggle C.K."/>
        </authorList>
    </citation>
    <scope>NUCLEOTIDE SEQUENCE [MRNA] OF 33-463</scope>
</reference>
<comment type="function">
    <text evidence="1">Receptor for retinoic acid. Retinoic acid receptors bind as heterodimers to their target response elements in response to their ligands, all-trans or 9-cis retinoic acid, and regulate gene expression in various biological processes. The RAR/RXR heterodimers bind to the retinoic acid response elements (RARE) composed of tandem 5'-AGGTCA-3' sites known as DR1-DR5. The high affinity ligand for RXRs is 9-cis retinoic acid (By similarity).</text>
</comment>
<comment type="subunit">
    <text evidence="2">Homodimer. Heterodimer with a RAR molecule. Binds DNA preferentially as a RAR/RXR heterodimer. Interacts with RARA (By similarity).</text>
</comment>
<comment type="subcellular location">
    <subcellularLocation>
        <location evidence="3">Nucleus</location>
    </subcellularLocation>
    <subcellularLocation>
        <location evidence="2">Cytoplasm</location>
    </subcellularLocation>
</comment>
<comment type="domain">
    <text evidence="6">Composed of three domains: a modulating N-terminal domain, a DNA-binding domain and a C-terminal ligand-binding domain.</text>
</comment>
<comment type="PTM">
    <text evidence="2">Acetylated by EP300.</text>
</comment>
<comment type="similarity">
    <text evidence="6">Belongs to the nuclear hormone receptor family. NR2 subfamily.</text>
</comment>
<accession>Q0GFF6</accession>
<accession>Q69B31</accession>
<protein>
    <recommendedName>
        <fullName>Retinoic acid receptor RXR-gamma</fullName>
    </recommendedName>
    <alternativeName>
        <fullName>Nuclear receptor subfamily 2 group B member 3</fullName>
    </alternativeName>
    <alternativeName>
        <fullName>Retinoid X receptor gamma</fullName>
    </alternativeName>
</protein>
<dbReference type="EMBL" id="DQ866834">
    <property type="protein sequence ID" value="ABI24018.1"/>
    <property type="molecule type" value="mRNA"/>
</dbReference>
<dbReference type="EMBL" id="AY429474">
    <property type="protein sequence ID" value="AAR96256.1"/>
    <property type="molecule type" value="mRNA"/>
</dbReference>
<dbReference type="RefSeq" id="NP_001123685.1">
    <property type="nucleotide sequence ID" value="NM_001130213.1"/>
</dbReference>
<dbReference type="SMR" id="Q0GFF6"/>
<dbReference type="FunCoup" id="Q0GFF6">
    <property type="interactions" value="390"/>
</dbReference>
<dbReference type="STRING" id="9823.ENSSSCP00000057363"/>
<dbReference type="PaxDb" id="9823-ENSSSCP00000006747"/>
<dbReference type="PeptideAtlas" id="Q0GFF6"/>
<dbReference type="Ensembl" id="ENSSSCT00000048789.2">
    <property type="protein sequence ID" value="ENSSSCP00000057363.1"/>
    <property type="gene ID" value="ENSSSCG00000006328.6"/>
</dbReference>
<dbReference type="Ensembl" id="ENSSSCT00015035538.1">
    <property type="protein sequence ID" value="ENSSSCP00015014139.1"/>
    <property type="gene ID" value="ENSSSCG00015026690.1"/>
</dbReference>
<dbReference type="Ensembl" id="ENSSSCT00025041192.1">
    <property type="protein sequence ID" value="ENSSSCP00025017525.1"/>
    <property type="gene ID" value="ENSSSCG00025030180.1"/>
</dbReference>
<dbReference type="Ensembl" id="ENSSSCT00030007294.1">
    <property type="protein sequence ID" value="ENSSSCP00030003258.1"/>
    <property type="gene ID" value="ENSSSCG00030005341.1"/>
</dbReference>
<dbReference type="Ensembl" id="ENSSSCT00035052016.1">
    <property type="protein sequence ID" value="ENSSSCP00035020895.1"/>
    <property type="gene ID" value="ENSSSCG00035039148.1"/>
</dbReference>
<dbReference type="Ensembl" id="ENSSSCT00040055167.1">
    <property type="protein sequence ID" value="ENSSSCP00040022926.1"/>
    <property type="gene ID" value="ENSSSCG00040041165.1"/>
</dbReference>
<dbReference type="Ensembl" id="ENSSSCT00045044077.1">
    <property type="protein sequence ID" value="ENSSSCP00045030586.1"/>
    <property type="gene ID" value="ENSSSCG00045025767.1"/>
</dbReference>
<dbReference type="Ensembl" id="ENSSSCT00050068762.1">
    <property type="protein sequence ID" value="ENSSSCP00050029521.1"/>
    <property type="gene ID" value="ENSSSCG00050050513.1"/>
</dbReference>
<dbReference type="Ensembl" id="ENSSSCT00055017133.1">
    <property type="protein sequence ID" value="ENSSSCP00055013529.1"/>
    <property type="gene ID" value="ENSSSCG00055008734.1"/>
</dbReference>
<dbReference type="Ensembl" id="ENSSSCT00060094058.1">
    <property type="protein sequence ID" value="ENSSSCP00060040695.1"/>
    <property type="gene ID" value="ENSSSCG00060068866.1"/>
</dbReference>
<dbReference type="Ensembl" id="ENSSSCT00065071761.1">
    <property type="protein sequence ID" value="ENSSSCP00065031278.1"/>
    <property type="gene ID" value="ENSSSCG00065052386.1"/>
</dbReference>
<dbReference type="Ensembl" id="ENSSSCT00070049233.1">
    <property type="protein sequence ID" value="ENSSSCP00070041586.1"/>
    <property type="gene ID" value="ENSSSCG00070024660.1"/>
</dbReference>
<dbReference type="Ensembl" id="ENSSSCT00090028033">
    <property type="protein sequence ID" value="ENSSSCP00090017191"/>
    <property type="gene ID" value="ENSSSCG00090015966"/>
</dbReference>
<dbReference type="Ensembl" id="ENSSSCT00105004688">
    <property type="protein sequence ID" value="ENSSSCP00105003489"/>
    <property type="gene ID" value="ENSSSCG00105002393"/>
</dbReference>
<dbReference type="Ensembl" id="ENSSSCT00110021815">
    <property type="protein sequence ID" value="ENSSSCP00110014705"/>
    <property type="gene ID" value="ENSSSCG00110011375"/>
</dbReference>
<dbReference type="Ensembl" id="ENSSSCT00115023840">
    <property type="protein sequence ID" value="ENSSSCP00115022606"/>
    <property type="gene ID" value="ENSSSCG00115013715"/>
</dbReference>
<dbReference type="Ensembl" id="ENSSSCT00130018810">
    <property type="protein sequence ID" value="ENSSSCP00130012683"/>
    <property type="gene ID" value="ENSSSCG00130010065"/>
</dbReference>
<dbReference type="GeneID" id="445465"/>
<dbReference type="KEGG" id="ssc:445465"/>
<dbReference type="CTD" id="6258"/>
<dbReference type="VGNC" id="VGNC:92530">
    <property type="gene designation" value="RXRG"/>
</dbReference>
<dbReference type="eggNOG" id="KOG3575">
    <property type="taxonomic scope" value="Eukaryota"/>
</dbReference>
<dbReference type="GeneTree" id="ENSGT00940000161269"/>
<dbReference type="HOGENOM" id="CLU_007368_5_4_1"/>
<dbReference type="InParanoid" id="Q0GFF6"/>
<dbReference type="OrthoDB" id="5873264at2759"/>
<dbReference type="TreeFam" id="TF352097"/>
<dbReference type="Reactome" id="R-SSC-383280">
    <property type="pathway name" value="Nuclear Receptor transcription pathway"/>
</dbReference>
<dbReference type="Proteomes" id="UP000008227">
    <property type="component" value="Chromosome 4"/>
</dbReference>
<dbReference type="Proteomes" id="UP000314985">
    <property type="component" value="Chromosome 4"/>
</dbReference>
<dbReference type="Proteomes" id="UP000694570">
    <property type="component" value="Unplaced"/>
</dbReference>
<dbReference type="Proteomes" id="UP000694571">
    <property type="component" value="Unplaced"/>
</dbReference>
<dbReference type="Proteomes" id="UP000694720">
    <property type="component" value="Unplaced"/>
</dbReference>
<dbReference type="Proteomes" id="UP000694722">
    <property type="component" value="Unplaced"/>
</dbReference>
<dbReference type="Proteomes" id="UP000694723">
    <property type="component" value="Unplaced"/>
</dbReference>
<dbReference type="Proteomes" id="UP000694724">
    <property type="component" value="Unplaced"/>
</dbReference>
<dbReference type="Proteomes" id="UP000694725">
    <property type="component" value="Unplaced"/>
</dbReference>
<dbReference type="Proteomes" id="UP000694726">
    <property type="component" value="Unplaced"/>
</dbReference>
<dbReference type="Proteomes" id="UP000694727">
    <property type="component" value="Unplaced"/>
</dbReference>
<dbReference type="Proteomes" id="UP000694728">
    <property type="component" value="Unplaced"/>
</dbReference>
<dbReference type="Bgee" id="ENSSSCG00000006328">
    <property type="expression patterns" value="Expressed in heart left ventricle and 33 other cell types or tissues"/>
</dbReference>
<dbReference type="ExpressionAtlas" id="Q0GFF6">
    <property type="expression patterns" value="baseline and differential"/>
</dbReference>
<dbReference type="GO" id="GO:0005737">
    <property type="term" value="C:cytoplasm"/>
    <property type="evidence" value="ECO:0007669"/>
    <property type="project" value="UniProtKB-SubCell"/>
</dbReference>
<dbReference type="GO" id="GO:0090575">
    <property type="term" value="C:RNA polymerase II transcription regulator complex"/>
    <property type="evidence" value="ECO:0000318"/>
    <property type="project" value="GO_Central"/>
</dbReference>
<dbReference type="GO" id="GO:0140693">
    <property type="term" value="F:molecular condensate scaffold activity"/>
    <property type="evidence" value="ECO:0007669"/>
    <property type="project" value="Ensembl"/>
</dbReference>
<dbReference type="GO" id="GO:0004879">
    <property type="term" value="F:nuclear receptor activity"/>
    <property type="evidence" value="ECO:0000318"/>
    <property type="project" value="GO_Central"/>
</dbReference>
<dbReference type="GO" id="GO:0003707">
    <property type="term" value="F:nuclear steroid receptor activity"/>
    <property type="evidence" value="ECO:0007669"/>
    <property type="project" value="InterPro"/>
</dbReference>
<dbReference type="GO" id="GO:0044323">
    <property type="term" value="F:retinoic acid-responsive element binding"/>
    <property type="evidence" value="ECO:0000318"/>
    <property type="project" value="GO_Central"/>
</dbReference>
<dbReference type="GO" id="GO:0008270">
    <property type="term" value="F:zinc ion binding"/>
    <property type="evidence" value="ECO:0007669"/>
    <property type="project" value="UniProtKB-KW"/>
</dbReference>
<dbReference type="GO" id="GO:0030154">
    <property type="term" value="P:cell differentiation"/>
    <property type="evidence" value="ECO:0000318"/>
    <property type="project" value="GO_Central"/>
</dbReference>
<dbReference type="GO" id="GO:0007399">
    <property type="term" value="P:nervous system development"/>
    <property type="evidence" value="ECO:0000318"/>
    <property type="project" value="GO_Central"/>
</dbReference>
<dbReference type="GO" id="GO:0045944">
    <property type="term" value="P:positive regulation of transcription by RNA polymerase II"/>
    <property type="evidence" value="ECO:0000318"/>
    <property type="project" value="GO_Central"/>
</dbReference>
<dbReference type="GO" id="GO:0048384">
    <property type="term" value="P:retinoic acid receptor signaling pathway"/>
    <property type="evidence" value="ECO:0000318"/>
    <property type="project" value="GO_Central"/>
</dbReference>
<dbReference type="CDD" id="cd06956">
    <property type="entry name" value="NR_DBD_RXR"/>
    <property type="match status" value="1"/>
</dbReference>
<dbReference type="CDD" id="cd06943">
    <property type="entry name" value="NR_LBD_RXR_like"/>
    <property type="match status" value="1"/>
</dbReference>
<dbReference type="FunFam" id="1.10.565.10:FF:000002">
    <property type="entry name" value="Retinoic acid receptor RXR-alpha"/>
    <property type="match status" value="1"/>
</dbReference>
<dbReference type="FunFam" id="3.30.50.10:FF:000005">
    <property type="entry name" value="Retinoic acid receptor RXR-alpha"/>
    <property type="match status" value="1"/>
</dbReference>
<dbReference type="Gene3D" id="3.30.50.10">
    <property type="entry name" value="Erythroid Transcription Factor GATA-1, subunit A"/>
    <property type="match status" value="1"/>
</dbReference>
<dbReference type="Gene3D" id="1.10.565.10">
    <property type="entry name" value="Retinoid X Receptor"/>
    <property type="match status" value="1"/>
</dbReference>
<dbReference type="InterPro" id="IPR035500">
    <property type="entry name" value="NHR-like_dom_sf"/>
</dbReference>
<dbReference type="InterPro" id="IPR021780">
    <property type="entry name" value="Nuc_recep-AF1"/>
</dbReference>
<dbReference type="InterPro" id="IPR000536">
    <property type="entry name" value="Nucl_hrmn_rcpt_lig-bd"/>
</dbReference>
<dbReference type="InterPro" id="IPR050274">
    <property type="entry name" value="Nuclear_hormone_rcpt_NR2"/>
</dbReference>
<dbReference type="InterPro" id="IPR001723">
    <property type="entry name" value="Nuclear_hrmn_rcpt"/>
</dbReference>
<dbReference type="InterPro" id="IPR000003">
    <property type="entry name" value="Retinoid-X_rcpt/HNF4"/>
</dbReference>
<dbReference type="InterPro" id="IPR001628">
    <property type="entry name" value="Znf_hrmn_rcpt"/>
</dbReference>
<dbReference type="InterPro" id="IPR013088">
    <property type="entry name" value="Znf_NHR/GATA"/>
</dbReference>
<dbReference type="PANTHER" id="PTHR24083">
    <property type="entry name" value="NUCLEAR HORMONE RECEPTOR"/>
    <property type="match status" value="1"/>
</dbReference>
<dbReference type="Pfam" id="PF00104">
    <property type="entry name" value="Hormone_recep"/>
    <property type="match status" value="1"/>
</dbReference>
<dbReference type="Pfam" id="PF11825">
    <property type="entry name" value="Nuc_recep-AF1"/>
    <property type="match status" value="1"/>
</dbReference>
<dbReference type="Pfam" id="PF00105">
    <property type="entry name" value="zf-C4"/>
    <property type="match status" value="1"/>
</dbReference>
<dbReference type="PRINTS" id="PR00545">
    <property type="entry name" value="RETINOIDXR"/>
</dbReference>
<dbReference type="PRINTS" id="PR00398">
    <property type="entry name" value="STRDHORMONER"/>
</dbReference>
<dbReference type="PRINTS" id="PR00047">
    <property type="entry name" value="STROIDFINGER"/>
</dbReference>
<dbReference type="SMART" id="SM00430">
    <property type="entry name" value="HOLI"/>
    <property type="match status" value="1"/>
</dbReference>
<dbReference type="SMART" id="SM00399">
    <property type="entry name" value="ZnF_C4"/>
    <property type="match status" value="1"/>
</dbReference>
<dbReference type="SUPFAM" id="SSF57716">
    <property type="entry name" value="Glucocorticoid receptor-like (DNA-binding domain)"/>
    <property type="match status" value="1"/>
</dbReference>
<dbReference type="SUPFAM" id="SSF48508">
    <property type="entry name" value="Nuclear receptor ligand-binding domain"/>
    <property type="match status" value="1"/>
</dbReference>
<dbReference type="PROSITE" id="PS51843">
    <property type="entry name" value="NR_LBD"/>
    <property type="match status" value="1"/>
</dbReference>
<dbReference type="PROSITE" id="PS00031">
    <property type="entry name" value="NUCLEAR_REC_DBD_1"/>
    <property type="match status" value="1"/>
</dbReference>
<dbReference type="PROSITE" id="PS51030">
    <property type="entry name" value="NUCLEAR_REC_DBD_2"/>
    <property type="match status" value="1"/>
</dbReference>
<sequence>MYGNYSHFMKFPTGFGGSPGHSGSTSMSPSAALSTGKPMDSHPSYTDTPVSAPRTLSAVGTPLNALGSPYRVITSTMGPPSGTLAAPPGINLVAPPSSQLNVVNSVSISEDIKPLPGLPGIGNMNYPSTSPGSLVKHICAICGDRSSGKHYGVYSCEGCKGFFKRTIRKDLIYTCRDNKDCLIDKRQRNRCQYCRYQKCLVMGMKREAVQEERQRSRERAESEAECASSGHEDMPVERILEAELAVEPKTESYGDMNMENSTNDPVTNICHAADKQLFTLVEWAKRIPHFSDLTLEDQVILLRAGWNELLIASFSHRSVSVQDGILLATGLHVHRSSAHSAGVGSIFDRVLTELVSKMKDMQMDKSELGCLRAIVLFNPDAKGLSNPSEVETLREKVYATLEAYTKQKYPEQPGRFAKLLLRLPALRSIGLKCLEHLFFFKLIGDTPIDTFLMEMLETPLQIT</sequence>
<name>RXRG_PIG</name>